<reference key="1">
    <citation type="journal article" date="2009" name="Proc. Natl. Acad. Sci. U.S.A.">
        <title>The genomic basis of trophic strategy in marine bacteria.</title>
        <authorList>
            <person name="Lauro F.M."/>
            <person name="McDougald D."/>
            <person name="Thomas T."/>
            <person name="Williams T.J."/>
            <person name="Egan S."/>
            <person name="Rice S."/>
            <person name="DeMaere M.Z."/>
            <person name="Ting L."/>
            <person name="Ertan H."/>
            <person name="Johnson J."/>
            <person name="Ferriera S."/>
            <person name="Lapidus A."/>
            <person name="Anderson I."/>
            <person name="Kyrpides N."/>
            <person name="Munk A.C."/>
            <person name="Detter C."/>
            <person name="Han C.S."/>
            <person name="Brown M.V."/>
            <person name="Robb F.T."/>
            <person name="Kjelleberg S."/>
            <person name="Cavicchioli R."/>
        </authorList>
    </citation>
    <scope>NUCLEOTIDE SEQUENCE [LARGE SCALE GENOMIC DNA]</scope>
    <source>
        <strain>DSM 13593 / LMG 18877 / RB2256</strain>
    </source>
</reference>
<keyword id="KW-1185">Reference proteome</keyword>
<keyword id="KW-0687">Ribonucleoprotein</keyword>
<keyword id="KW-0689">Ribosomal protein</keyword>
<keyword id="KW-0694">RNA-binding</keyword>
<keyword id="KW-0699">rRNA-binding</keyword>
<organism>
    <name type="scientific">Sphingopyxis alaskensis (strain DSM 13593 / LMG 18877 / RB2256)</name>
    <name type="common">Sphingomonas alaskensis</name>
    <dbReference type="NCBI Taxonomy" id="317655"/>
    <lineage>
        <taxon>Bacteria</taxon>
        <taxon>Pseudomonadati</taxon>
        <taxon>Pseudomonadota</taxon>
        <taxon>Alphaproteobacteria</taxon>
        <taxon>Sphingomonadales</taxon>
        <taxon>Sphingomonadaceae</taxon>
        <taxon>Sphingopyxis</taxon>
    </lineage>
</organism>
<dbReference type="EMBL" id="CP000356">
    <property type="protein sequence ID" value="ABF54512.1"/>
    <property type="molecule type" value="Genomic_DNA"/>
</dbReference>
<dbReference type="RefSeq" id="WP_011543077.1">
    <property type="nucleotide sequence ID" value="NC_008048.1"/>
</dbReference>
<dbReference type="SMR" id="Q1GPB0"/>
<dbReference type="STRING" id="317655.Sala_2807"/>
<dbReference type="KEGG" id="sal:Sala_2807"/>
<dbReference type="eggNOG" id="COG0198">
    <property type="taxonomic scope" value="Bacteria"/>
</dbReference>
<dbReference type="HOGENOM" id="CLU_093315_2_0_5"/>
<dbReference type="OrthoDB" id="9807419at2"/>
<dbReference type="Proteomes" id="UP000006578">
    <property type="component" value="Chromosome"/>
</dbReference>
<dbReference type="GO" id="GO:1990904">
    <property type="term" value="C:ribonucleoprotein complex"/>
    <property type="evidence" value="ECO:0007669"/>
    <property type="project" value="UniProtKB-KW"/>
</dbReference>
<dbReference type="GO" id="GO:0005840">
    <property type="term" value="C:ribosome"/>
    <property type="evidence" value="ECO:0007669"/>
    <property type="project" value="UniProtKB-KW"/>
</dbReference>
<dbReference type="GO" id="GO:0019843">
    <property type="term" value="F:rRNA binding"/>
    <property type="evidence" value="ECO:0007669"/>
    <property type="project" value="UniProtKB-UniRule"/>
</dbReference>
<dbReference type="GO" id="GO:0003735">
    <property type="term" value="F:structural constituent of ribosome"/>
    <property type="evidence" value="ECO:0007669"/>
    <property type="project" value="InterPro"/>
</dbReference>
<dbReference type="GO" id="GO:0006412">
    <property type="term" value="P:translation"/>
    <property type="evidence" value="ECO:0007669"/>
    <property type="project" value="UniProtKB-UniRule"/>
</dbReference>
<dbReference type="CDD" id="cd06089">
    <property type="entry name" value="KOW_RPL26"/>
    <property type="match status" value="1"/>
</dbReference>
<dbReference type="FunFam" id="2.30.30.30:FF:000004">
    <property type="entry name" value="50S ribosomal protein L24"/>
    <property type="match status" value="1"/>
</dbReference>
<dbReference type="Gene3D" id="2.30.30.30">
    <property type="match status" value="1"/>
</dbReference>
<dbReference type="HAMAP" id="MF_01326_B">
    <property type="entry name" value="Ribosomal_uL24_B"/>
    <property type="match status" value="1"/>
</dbReference>
<dbReference type="InterPro" id="IPR005824">
    <property type="entry name" value="KOW"/>
</dbReference>
<dbReference type="InterPro" id="IPR014722">
    <property type="entry name" value="Rib_uL2_dom2"/>
</dbReference>
<dbReference type="InterPro" id="IPR003256">
    <property type="entry name" value="Ribosomal_uL24"/>
</dbReference>
<dbReference type="InterPro" id="IPR005825">
    <property type="entry name" value="Ribosomal_uL24_CS"/>
</dbReference>
<dbReference type="InterPro" id="IPR041988">
    <property type="entry name" value="Ribosomal_uL24_KOW"/>
</dbReference>
<dbReference type="InterPro" id="IPR008991">
    <property type="entry name" value="Translation_prot_SH3-like_sf"/>
</dbReference>
<dbReference type="NCBIfam" id="TIGR01079">
    <property type="entry name" value="rplX_bact"/>
    <property type="match status" value="1"/>
</dbReference>
<dbReference type="PANTHER" id="PTHR12903">
    <property type="entry name" value="MITOCHONDRIAL RIBOSOMAL PROTEIN L24"/>
    <property type="match status" value="1"/>
</dbReference>
<dbReference type="Pfam" id="PF00467">
    <property type="entry name" value="KOW"/>
    <property type="match status" value="1"/>
</dbReference>
<dbReference type="Pfam" id="PF17136">
    <property type="entry name" value="ribosomal_L24"/>
    <property type="match status" value="1"/>
</dbReference>
<dbReference type="SMART" id="SM00739">
    <property type="entry name" value="KOW"/>
    <property type="match status" value="1"/>
</dbReference>
<dbReference type="SUPFAM" id="SSF50104">
    <property type="entry name" value="Translation proteins SH3-like domain"/>
    <property type="match status" value="1"/>
</dbReference>
<dbReference type="PROSITE" id="PS01108">
    <property type="entry name" value="RIBOSOMAL_L24"/>
    <property type="match status" value="1"/>
</dbReference>
<proteinExistence type="inferred from homology"/>
<gene>
    <name evidence="1" type="primary">rplX</name>
    <name type="ordered locus">Sala_2807</name>
</gene>
<accession>Q1GPB0</accession>
<feature type="chain" id="PRO_1000086498" description="Large ribosomal subunit protein uL24">
    <location>
        <begin position="1"/>
        <end position="105"/>
    </location>
</feature>
<protein>
    <recommendedName>
        <fullName evidence="1">Large ribosomal subunit protein uL24</fullName>
    </recommendedName>
    <alternativeName>
        <fullName evidence="2">50S ribosomal protein L24</fullName>
    </alternativeName>
</protein>
<name>RL24_SPHAL</name>
<comment type="function">
    <text evidence="1">One of two assembly initiator proteins, it binds directly to the 5'-end of the 23S rRNA, where it nucleates assembly of the 50S subunit.</text>
</comment>
<comment type="function">
    <text evidence="1">One of the proteins that surrounds the polypeptide exit tunnel on the outside of the subunit.</text>
</comment>
<comment type="subunit">
    <text evidence="1">Part of the 50S ribosomal subunit.</text>
</comment>
<comment type="similarity">
    <text evidence="1">Belongs to the universal ribosomal protein uL24 family.</text>
</comment>
<evidence type="ECO:0000255" key="1">
    <source>
        <dbReference type="HAMAP-Rule" id="MF_01326"/>
    </source>
</evidence>
<evidence type="ECO:0000305" key="2"/>
<sequence>MANKIKKGDTVVVLSGKDKGKTGEVTQALPKDGKVVVAGVNVITRHRKPTQQNPQGGLERKEAPLFASKVALADPKTGKPTRVRFETRDGKKVRVAVKSGETING</sequence>